<feature type="chain" id="PRO_0000106963" description="Uncharacterized protein MJ0635">
    <location>
        <begin position="1"/>
        <end position="283"/>
    </location>
</feature>
<dbReference type="EMBL" id="L77117">
    <property type="protein sequence ID" value="AAB98633.1"/>
    <property type="molecule type" value="Genomic_DNA"/>
</dbReference>
<dbReference type="PIR" id="C64379">
    <property type="entry name" value="C64379"/>
</dbReference>
<dbReference type="SMR" id="Q58052"/>
<dbReference type="STRING" id="243232.MJ_0635"/>
<dbReference type="PaxDb" id="243232-MJ_0635"/>
<dbReference type="EnsemblBacteria" id="AAB98633">
    <property type="protein sequence ID" value="AAB98633"/>
    <property type="gene ID" value="MJ_0635"/>
</dbReference>
<dbReference type="KEGG" id="mja:MJ_0635"/>
<dbReference type="eggNOG" id="arCOG08205">
    <property type="taxonomic scope" value="Archaea"/>
</dbReference>
<dbReference type="HOGENOM" id="CLU_982156_0_0_2"/>
<dbReference type="InParanoid" id="Q58052"/>
<dbReference type="OrthoDB" id="65877at2157"/>
<dbReference type="Proteomes" id="UP000000805">
    <property type="component" value="Chromosome"/>
</dbReference>
<dbReference type="PROSITE" id="PS51257">
    <property type="entry name" value="PROKAR_LIPOPROTEIN"/>
    <property type="match status" value="1"/>
</dbReference>
<sequence length="283" mass="32502">MKFMRIVRILAILLALIIGTSLCGCLNDSKSEADELIKMLPVDYNGFVYVNFKNIEDSKYSSEYRSKILNALRLGNANGEKTGIYINKTKRMIFSGSGYDRFVIIIEGDYDFDKFKNHLKEIGVNPVEEYGGFKIYTKPNDDKIALTFYKDMIIAGTKQGVYDCINVINGEMDSLLKNREVMEIYDRLPSDACVYEVSGTYSPWYKTVAEGMSISFENNDRVKVVRVEKYKDEETAKEKYEELLKKKDRDKEEMEKKGITADIKLDGQYLIVTVEGPEDELKI</sequence>
<proteinExistence type="predicted"/>
<gene>
    <name type="ordered locus">MJ0635</name>
</gene>
<name>Y635_METJA</name>
<protein>
    <recommendedName>
        <fullName>Uncharacterized protein MJ0635</fullName>
    </recommendedName>
</protein>
<reference key="1">
    <citation type="journal article" date="1996" name="Science">
        <title>Complete genome sequence of the methanogenic archaeon, Methanococcus jannaschii.</title>
        <authorList>
            <person name="Bult C.J."/>
            <person name="White O."/>
            <person name="Olsen G.J."/>
            <person name="Zhou L."/>
            <person name="Fleischmann R.D."/>
            <person name="Sutton G.G."/>
            <person name="Blake J.A."/>
            <person name="FitzGerald L.M."/>
            <person name="Clayton R.A."/>
            <person name="Gocayne J.D."/>
            <person name="Kerlavage A.R."/>
            <person name="Dougherty B.A."/>
            <person name="Tomb J.-F."/>
            <person name="Adams M.D."/>
            <person name="Reich C.I."/>
            <person name="Overbeek R."/>
            <person name="Kirkness E.F."/>
            <person name="Weinstock K.G."/>
            <person name="Merrick J.M."/>
            <person name="Glodek A."/>
            <person name="Scott J.L."/>
            <person name="Geoghagen N.S.M."/>
            <person name="Weidman J.F."/>
            <person name="Fuhrmann J.L."/>
            <person name="Nguyen D."/>
            <person name="Utterback T.R."/>
            <person name="Kelley J.M."/>
            <person name="Peterson J.D."/>
            <person name="Sadow P.W."/>
            <person name="Hanna M.C."/>
            <person name="Cotton M.D."/>
            <person name="Roberts K.M."/>
            <person name="Hurst M.A."/>
            <person name="Kaine B.P."/>
            <person name="Borodovsky M."/>
            <person name="Klenk H.-P."/>
            <person name="Fraser C.M."/>
            <person name="Smith H.O."/>
            <person name="Woese C.R."/>
            <person name="Venter J.C."/>
        </authorList>
    </citation>
    <scope>NUCLEOTIDE SEQUENCE [LARGE SCALE GENOMIC DNA]</scope>
    <source>
        <strain>ATCC 43067 / DSM 2661 / JAL-1 / JCM 10045 / NBRC 100440</strain>
    </source>
</reference>
<accession>Q58052</accession>
<keyword id="KW-1185">Reference proteome</keyword>
<organism>
    <name type="scientific">Methanocaldococcus jannaschii (strain ATCC 43067 / DSM 2661 / JAL-1 / JCM 10045 / NBRC 100440)</name>
    <name type="common">Methanococcus jannaschii</name>
    <dbReference type="NCBI Taxonomy" id="243232"/>
    <lineage>
        <taxon>Archaea</taxon>
        <taxon>Methanobacteriati</taxon>
        <taxon>Methanobacteriota</taxon>
        <taxon>Methanomada group</taxon>
        <taxon>Methanococci</taxon>
        <taxon>Methanococcales</taxon>
        <taxon>Methanocaldococcaceae</taxon>
        <taxon>Methanocaldococcus</taxon>
    </lineage>
</organism>